<evidence type="ECO:0000250" key="1"/>
<evidence type="ECO:0000256" key="2">
    <source>
        <dbReference type="SAM" id="MobiDB-lite"/>
    </source>
</evidence>
<evidence type="ECO:0000305" key="3"/>
<name>EPL1_NEUCR</name>
<dbReference type="EMBL" id="CM002240">
    <property type="protein sequence ID" value="EAA31357.1"/>
    <property type="molecule type" value="Genomic_DNA"/>
</dbReference>
<dbReference type="RefSeq" id="XP_960593.1">
    <property type="nucleotide sequence ID" value="XM_955500.2"/>
</dbReference>
<dbReference type="SMR" id="Q7S747"/>
<dbReference type="STRING" id="367110.Q7S747"/>
<dbReference type="PaxDb" id="5141-EFNCRP00000003346"/>
<dbReference type="EnsemblFungi" id="EAA31357">
    <property type="protein sequence ID" value="EAA31357"/>
    <property type="gene ID" value="NCU03834"/>
</dbReference>
<dbReference type="GeneID" id="3876740"/>
<dbReference type="KEGG" id="ncr:NCU03834"/>
<dbReference type="VEuPathDB" id="FungiDB:NCU03834"/>
<dbReference type="HOGENOM" id="CLU_010580_1_0_1"/>
<dbReference type="InParanoid" id="Q7S747"/>
<dbReference type="OMA" id="HIKWNEG"/>
<dbReference type="OrthoDB" id="435275at2759"/>
<dbReference type="Proteomes" id="UP000001805">
    <property type="component" value="Chromosome 2, Linkage Group V"/>
</dbReference>
<dbReference type="GO" id="GO:0035267">
    <property type="term" value="C:NuA4 histone acetyltransferase complex"/>
    <property type="evidence" value="ECO:0007669"/>
    <property type="project" value="InterPro"/>
</dbReference>
<dbReference type="GO" id="GO:0005634">
    <property type="term" value="C:nucleus"/>
    <property type="evidence" value="ECO:0007669"/>
    <property type="project" value="UniProtKB-SubCell"/>
</dbReference>
<dbReference type="GO" id="GO:0032777">
    <property type="term" value="C:piccolo histone acetyltransferase complex"/>
    <property type="evidence" value="ECO:0000318"/>
    <property type="project" value="GO_Central"/>
</dbReference>
<dbReference type="GO" id="GO:0006281">
    <property type="term" value="P:DNA repair"/>
    <property type="evidence" value="ECO:0007669"/>
    <property type="project" value="UniProtKB-KW"/>
</dbReference>
<dbReference type="GO" id="GO:0006357">
    <property type="term" value="P:regulation of transcription by RNA polymerase II"/>
    <property type="evidence" value="ECO:0000318"/>
    <property type="project" value="GO_Central"/>
</dbReference>
<dbReference type="InterPro" id="IPR024943">
    <property type="entry name" value="Enhancer_polycomb"/>
</dbReference>
<dbReference type="InterPro" id="IPR019542">
    <property type="entry name" value="Enhancer_polycomb-like_N"/>
</dbReference>
<dbReference type="PANTHER" id="PTHR14898">
    <property type="entry name" value="ENHANCER OF POLYCOMB"/>
    <property type="match status" value="1"/>
</dbReference>
<dbReference type="Pfam" id="PF10513">
    <property type="entry name" value="EPL1"/>
    <property type="match status" value="1"/>
</dbReference>
<reference key="1">
    <citation type="journal article" date="2003" name="Nature">
        <title>The genome sequence of the filamentous fungus Neurospora crassa.</title>
        <authorList>
            <person name="Galagan J.E."/>
            <person name="Calvo S.E."/>
            <person name="Borkovich K.A."/>
            <person name="Selker E.U."/>
            <person name="Read N.D."/>
            <person name="Jaffe D.B."/>
            <person name="FitzHugh W."/>
            <person name="Ma L.-J."/>
            <person name="Smirnov S."/>
            <person name="Purcell S."/>
            <person name="Rehman B."/>
            <person name="Elkins T."/>
            <person name="Engels R."/>
            <person name="Wang S."/>
            <person name="Nielsen C.B."/>
            <person name="Butler J."/>
            <person name="Endrizzi M."/>
            <person name="Qui D."/>
            <person name="Ianakiev P."/>
            <person name="Bell-Pedersen D."/>
            <person name="Nelson M.A."/>
            <person name="Werner-Washburne M."/>
            <person name="Selitrennikoff C.P."/>
            <person name="Kinsey J.A."/>
            <person name="Braun E.L."/>
            <person name="Zelter A."/>
            <person name="Schulte U."/>
            <person name="Kothe G.O."/>
            <person name="Jedd G."/>
            <person name="Mewes H.-W."/>
            <person name="Staben C."/>
            <person name="Marcotte E."/>
            <person name="Greenberg D."/>
            <person name="Roy A."/>
            <person name="Foley K."/>
            <person name="Naylor J."/>
            <person name="Stange-Thomann N."/>
            <person name="Barrett R."/>
            <person name="Gnerre S."/>
            <person name="Kamal M."/>
            <person name="Kamvysselis M."/>
            <person name="Mauceli E.W."/>
            <person name="Bielke C."/>
            <person name="Rudd S."/>
            <person name="Frishman D."/>
            <person name="Krystofova S."/>
            <person name="Rasmussen C."/>
            <person name="Metzenberg R.L."/>
            <person name="Perkins D.D."/>
            <person name="Kroken S."/>
            <person name="Cogoni C."/>
            <person name="Macino G."/>
            <person name="Catcheside D.E.A."/>
            <person name="Li W."/>
            <person name="Pratt R.J."/>
            <person name="Osmani S.A."/>
            <person name="DeSouza C.P.C."/>
            <person name="Glass N.L."/>
            <person name="Orbach M.J."/>
            <person name="Berglund J.A."/>
            <person name="Voelker R."/>
            <person name="Yarden O."/>
            <person name="Plamann M."/>
            <person name="Seiler S."/>
            <person name="Dunlap J.C."/>
            <person name="Radford A."/>
            <person name="Aramayo R."/>
            <person name="Natvig D.O."/>
            <person name="Alex L.A."/>
            <person name="Mannhaupt G."/>
            <person name="Ebbole D.J."/>
            <person name="Freitag M."/>
            <person name="Paulsen I."/>
            <person name="Sachs M.S."/>
            <person name="Lander E.S."/>
            <person name="Nusbaum C."/>
            <person name="Birren B.W."/>
        </authorList>
    </citation>
    <scope>NUCLEOTIDE SEQUENCE [LARGE SCALE GENOMIC DNA]</scope>
    <source>
        <strain>ATCC 24698 / 74-OR23-1A / CBS 708.71 / DSM 1257 / FGSC 987</strain>
    </source>
</reference>
<feature type="chain" id="PRO_0000214164" description="Enhancer of polycomb-like protein 1">
    <location>
        <begin position="1"/>
        <end position="589"/>
    </location>
</feature>
<feature type="region of interest" description="Disordered" evidence="2">
    <location>
        <begin position="298"/>
        <end position="339"/>
    </location>
</feature>
<feature type="region of interest" description="Disordered" evidence="2">
    <location>
        <begin position="403"/>
        <end position="430"/>
    </location>
</feature>
<feature type="region of interest" description="Disordered" evidence="2">
    <location>
        <begin position="468"/>
        <end position="497"/>
    </location>
</feature>
<feature type="region of interest" description="Disordered" evidence="2">
    <location>
        <begin position="516"/>
        <end position="589"/>
    </location>
</feature>
<feature type="compositionally biased region" description="Basic and acidic residues" evidence="2">
    <location>
        <begin position="474"/>
        <end position="487"/>
    </location>
</feature>
<feature type="compositionally biased region" description="Low complexity" evidence="2">
    <location>
        <begin position="557"/>
        <end position="566"/>
    </location>
</feature>
<feature type="compositionally biased region" description="Pro residues" evidence="2">
    <location>
        <begin position="567"/>
        <end position="589"/>
    </location>
</feature>
<comment type="function">
    <text evidence="1">Component of the NuA4 histone acetyltransferase complex which is involved in transcriptional activation of selected genes principally by acetylation of nucleosomal histone H4 and H2A. The NuA4 complex is also involved in DNA repair. Involved in gene silencing by neighboring heterochromatin, blockage of the silencing spreading along the chromosome, and required for cell cycle progression through G2/M (By similarity).</text>
</comment>
<comment type="subunit">
    <text evidence="1">Component of the NuA4 histone acetyltransferase complex.</text>
</comment>
<comment type="subcellular location">
    <subcellularLocation>
        <location evidence="1">Nucleus</location>
    </subcellularLocation>
</comment>
<comment type="similarity">
    <text evidence="3">Belongs to the enhancer of polycomb family.</text>
</comment>
<protein>
    <recommendedName>
        <fullName>Enhancer of polycomb-like protein 1</fullName>
    </recommendedName>
</protein>
<organism>
    <name type="scientific">Neurospora crassa (strain ATCC 24698 / 74-OR23-1A / CBS 708.71 / DSM 1257 / FGSC 987)</name>
    <dbReference type="NCBI Taxonomy" id="367110"/>
    <lineage>
        <taxon>Eukaryota</taxon>
        <taxon>Fungi</taxon>
        <taxon>Dikarya</taxon>
        <taxon>Ascomycota</taxon>
        <taxon>Pezizomycotina</taxon>
        <taxon>Sordariomycetes</taxon>
        <taxon>Sordariomycetidae</taxon>
        <taxon>Sordariales</taxon>
        <taxon>Sordariaceae</taxon>
        <taxon>Neurospora</taxon>
    </lineage>
</organism>
<gene>
    <name type="primary">epl-1</name>
    <name type="ORF">NCU03834</name>
</gene>
<sequence length="589" mass="67297">MATRKVRYKKLSVKTQLAVLREDQIEASEYESLTSENQIATGVEQAEENEYHLQAVLKGAGVAADQEIPVPPPQQSELDYDQFYPQKVAKTSTYIRFSQTVEECISCLYDMTEDDETFLKSYNMKLTPSARLSEDDFERIMDVYEDMAANITPFSAIDQTVPSYQEMLRGLEPLDSTKVMVHAKQIYEYWKSRREISKNRPLNPTLKFETHAESDELDPYVCFRRREIRQTRKTRARDVQSADKLKRLRKELEEGRQLILAAHNRELLKADMLKVERAIFDQRAIIKEQKLRLGIRTGDEDLVNQKPQKRKAPEAPSAQRPPPPPQIRMPVRPDGRPAESDLVQLSDRLAEKNAELIIEIEKKIQNHIDWNKNYVDLTGKPLSPVQGPRQDLGFRPAKTQYLMTPPASASSGSMDEPTPMDLDKPKPNPPPPVKFRGVAQDEQSLAHPPSYRRRIGRLNRLWIDRRGLPSPARDLSEEQSDRWKYDQSSDDEDDAPVYMLDPFDTKALRYRASIPLQTVTRPPPPVINRQFIPPGAVPQQLAQSSFAPGQPQPQSQPQPNQSQSLPLPQPQQPVAQPQPQPQPQAQPVS</sequence>
<accession>Q7S747</accession>
<proteinExistence type="inferred from homology"/>
<keyword id="KW-0131">Cell cycle</keyword>
<keyword id="KW-0227">DNA damage</keyword>
<keyword id="KW-0234">DNA repair</keyword>
<keyword id="KW-0539">Nucleus</keyword>
<keyword id="KW-1185">Reference proteome</keyword>
<keyword id="KW-0804">Transcription</keyword>
<keyword id="KW-0805">Transcription regulation</keyword>